<organism>
    <name type="scientific">Lodderomyces elongisporus (strain ATCC 11503 / CBS 2605 / JCM 1781 / NBRC 1676 / NRRL YB-4239)</name>
    <name type="common">Yeast</name>
    <name type="synonym">Saccharomyces elongisporus</name>
    <dbReference type="NCBI Taxonomy" id="379508"/>
    <lineage>
        <taxon>Eukaryota</taxon>
        <taxon>Fungi</taxon>
        <taxon>Dikarya</taxon>
        <taxon>Ascomycota</taxon>
        <taxon>Saccharomycotina</taxon>
        <taxon>Pichiomycetes</taxon>
        <taxon>Debaryomycetaceae</taxon>
        <taxon>Candida/Lodderomyces clade</taxon>
        <taxon>Lodderomyces</taxon>
    </lineage>
</organism>
<gene>
    <name type="primary">RSM25</name>
    <name type="ORF">LELG_00517</name>
</gene>
<proteinExistence type="inferred from homology"/>
<accession>A5DT31</accession>
<evidence type="ECO:0000250" key="1"/>
<evidence type="ECO:0000305" key="2"/>
<name>RT25_LODEL</name>
<dbReference type="EMBL" id="CH981524">
    <property type="protein sequence ID" value="EDK42339.1"/>
    <property type="molecule type" value="Genomic_DNA"/>
</dbReference>
<dbReference type="RefSeq" id="XP_001527997.1">
    <property type="nucleotide sequence ID" value="XM_001527947.1"/>
</dbReference>
<dbReference type="SMR" id="A5DT31"/>
<dbReference type="FunCoup" id="A5DT31">
    <property type="interactions" value="147"/>
</dbReference>
<dbReference type="STRING" id="379508.A5DT31"/>
<dbReference type="GeneID" id="5235029"/>
<dbReference type="KEGG" id="lel:PVL30_000502"/>
<dbReference type="VEuPathDB" id="FungiDB:LELG_00517"/>
<dbReference type="eggNOG" id="ENOG502RZQQ">
    <property type="taxonomic scope" value="Eukaryota"/>
</dbReference>
<dbReference type="HOGENOM" id="CLU_081350_0_0_1"/>
<dbReference type="InParanoid" id="A5DT31"/>
<dbReference type="OMA" id="WELARPQ"/>
<dbReference type="OrthoDB" id="5542239at2759"/>
<dbReference type="Proteomes" id="UP000001996">
    <property type="component" value="Unassembled WGS sequence"/>
</dbReference>
<dbReference type="GO" id="GO:0005763">
    <property type="term" value="C:mitochondrial small ribosomal subunit"/>
    <property type="evidence" value="ECO:0007669"/>
    <property type="project" value="EnsemblFungi"/>
</dbReference>
<dbReference type="GO" id="GO:0003735">
    <property type="term" value="F:structural constituent of ribosome"/>
    <property type="evidence" value="ECO:0007669"/>
    <property type="project" value="EnsemblFungi"/>
</dbReference>
<dbReference type="InterPro" id="IPR016939">
    <property type="entry name" value="Ribosomal_mS23_fun"/>
</dbReference>
<dbReference type="PANTHER" id="PTHR37799">
    <property type="entry name" value="37S RIBOSOMAL PROTEIN S25, MITOCHONDRIAL"/>
    <property type="match status" value="1"/>
</dbReference>
<dbReference type="PANTHER" id="PTHR37799:SF1">
    <property type="entry name" value="SMALL RIBOSOMAL SUBUNIT PROTEIN MS23"/>
    <property type="match status" value="1"/>
</dbReference>
<dbReference type="Pfam" id="PF13741">
    <property type="entry name" value="MRP-S25"/>
    <property type="match status" value="1"/>
</dbReference>
<dbReference type="PIRSF" id="PIRSF029764">
    <property type="entry name" value="RSM25"/>
    <property type="match status" value="1"/>
</dbReference>
<protein>
    <recommendedName>
        <fullName evidence="2">Small ribosomal subunit protein mS23</fullName>
    </recommendedName>
    <alternativeName>
        <fullName>37S ribosomal protein S25, mitochondrial</fullName>
    </alternativeName>
</protein>
<keyword id="KW-0496">Mitochondrion</keyword>
<keyword id="KW-1185">Reference proteome</keyword>
<keyword id="KW-0687">Ribonucleoprotein</keyword>
<keyword id="KW-0689">Ribosomal protein</keyword>
<comment type="subunit">
    <text evidence="1">Component of the mitochondrial small ribosomal subunit.</text>
</comment>
<comment type="subcellular location">
    <subcellularLocation>
        <location evidence="1">Mitochondrion</location>
    </subcellularLocation>
</comment>
<comment type="similarity">
    <text evidence="2">Belongs to the mitochondrion-specific ribosomal protein mS23 family.</text>
</comment>
<reference key="1">
    <citation type="journal article" date="2009" name="Nature">
        <title>Evolution of pathogenicity and sexual reproduction in eight Candida genomes.</title>
        <authorList>
            <person name="Butler G."/>
            <person name="Rasmussen M.D."/>
            <person name="Lin M.F."/>
            <person name="Santos M.A.S."/>
            <person name="Sakthikumar S."/>
            <person name="Munro C.A."/>
            <person name="Rheinbay E."/>
            <person name="Grabherr M."/>
            <person name="Forche A."/>
            <person name="Reedy J.L."/>
            <person name="Agrafioti I."/>
            <person name="Arnaud M.B."/>
            <person name="Bates S."/>
            <person name="Brown A.J.P."/>
            <person name="Brunke S."/>
            <person name="Costanzo M.C."/>
            <person name="Fitzpatrick D.A."/>
            <person name="de Groot P.W.J."/>
            <person name="Harris D."/>
            <person name="Hoyer L.L."/>
            <person name="Hube B."/>
            <person name="Klis F.M."/>
            <person name="Kodira C."/>
            <person name="Lennard N."/>
            <person name="Logue M.E."/>
            <person name="Martin R."/>
            <person name="Neiman A.M."/>
            <person name="Nikolaou E."/>
            <person name="Quail M.A."/>
            <person name="Quinn J."/>
            <person name="Santos M.C."/>
            <person name="Schmitzberger F.F."/>
            <person name="Sherlock G."/>
            <person name="Shah P."/>
            <person name="Silverstein K.A.T."/>
            <person name="Skrzypek M.S."/>
            <person name="Soll D."/>
            <person name="Staggs R."/>
            <person name="Stansfield I."/>
            <person name="Stumpf M.P.H."/>
            <person name="Sudbery P.E."/>
            <person name="Srikantha T."/>
            <person name="Zeng Q."/>
            <person name="Berman J."/>
            <person name="Berriman M."/>
            <person name="Heitman J."/>
            <person name="Gow N.A.R."/>
            <person name="Lorenz M.C."/>
            <person name="Birren B.W."/>
            <person name="Kellis M."/>
            <person name="Cuomo C.A."/>
        </authorList>
    </citation>
    <scope>NUCLEOTIDE SEQUENCE [LARGE SCALE GENOMIC DNA]</scope>
    <source>
        <strain>ATCC 11503 / BCRC 21390 / CBS 2605 / JCM 1781 / NBRC 1676 / NRRL YB-4239</strain>
    </source>
</reference>
<feature type="chain" id="PRO_0000343553" description="Small ribosomal subunit protein mS23">
    <location>
        <begin position="1"/>
        <end position="309"/>
    </location>
</feature>
<sequence>MRIQTDAVNVVSRASSYLLSGLLKRKPLWFDVVAKYPPKQNLIKVPYIQSKENKDPRNDQFELKKRDRKRPLSALYQTRASKMENGNLNRKIHRIPKLKFLEDEIRDYFHLRHPWENARPKTLVENSGDEVLRKCDWSRMLQLYKPLDGESVVQRTMYILQNDPEVKDVFEAYDIARFEYYKLRMAEEMESHVAKEESVMHGAVFESTHLDWNLTTEQKYIDDWVKIASEKTQVLEANRSKSNAPAGSMGGEEVEAAQVSIFEVFCKLVHQRELKVSKERRSRVQQKTHEETSRALYIIEMKMKRILEK</sequence>